<reference key="1">
    <citation type="journal article" date="2002" name="Nature">
        <title>Comparison of the genomes of two Xanthomonas pathogens with differing host specificities.</title>
        <authorList>
            <person name="da Silva A.C.R."/>
            <person name="Ferro J.A."/>
            <person name="Reinach F.C."/>
            <person name="Farah C.S."/>
            <person name="Furlan L.R."/>
            <person name="Quaggio R.B."/>
            <person name="Monteiro-Vitorello C.B."/>
            <person name="Van Sluys M.A."/>
            <person name="Almeida N.F. Jr."/>
            <person name="Alves L.M.C."/>
            <person name="do Amaral A.M."/>
            <person name="Bertolini M.C."/>
            <person name="Camargo L.E.A."/>
            <person name="Camarotte G."/>
            <person name="Cannavan F."/>
            <person name="Cardozo J."/>
            <person name="Chambergo F."/>
            <person name="Ciapina L.P."/>
            <person name="Cicarelli R.M.B."/>
            <person name="Coutinho L.L."/>
            <person name="Cursino-Santos J.R."/>
            <person name="El-Dorry H."/>
            <person name="Faria J.B."/>
            <person name="Ferreira A.J.S."/>
            <person name="Ferreira R.C.C."/>
            <person name="Ferro M.I.T."/>
            <person name="Formighieri E.F."/>
            <person name="Franco M.C."/>
            <person name="Greggio C.C."/>
            <person name="Gruber A."/>
            <person name="Katsuyama A.M."/>
            <person name="Kishi L.T."/>
            <person name="Leite R.P."/>
            <person name="Lemos E.G.M."/>
            <person name="Lemos M.V.F."/>
            <person name="Locali E.C."/>
            <person name="Machado M.A."/>
            <person name="Madeira A.M.B.N."/>
            <person name="Martinez-Rossi N.M."/>
            <person name="Martins E.C."/>
            <person name="Meidanis J."/>
            <person name="Menck C.F.M."/>
            <person name="Miyaki C.Y."/>
            <person name="Moon D.H."/>
            <person name="Moreira L.M."/>
            <person name="Novo M.T.M."/>
            <person name="Okura V.K."/>
            <person name="Oliveira M.C."/>
            <person name="Oliveira V.R."/>
            <person name="Pereira H.A."/>
            <person name="Rossi A."/>
            <person name="Sena J.A.D."/>
            <person name="Silva C."/>
            <person name="de Souza R.F."/>
            <person name="Spinola L.A.F."/>
            <person name="Takita M.A."/>
            <person name="Tamura R.E."/>
            <person name="Teixeira E.C."/>
            <person name="Tezza R.I.D."/>
            <person name="Trindade dos Santos M."/>
            <person name="Truffi D."/>
            <person name="Tsai S.M."/>
            <person name="White F.F."/>
            <person name="Setubal J.C."/>
            <person name="Kitajima J.P."/>
        </authorList>
    </citation>
    <scope>NUCLEOTIDE SEQUENCE [LARGE SCALE GENOMIC DNA]</scope>
    <source>
        <strain>ATCC 33913 / DSM 3586 / NCPPB 528 / LMG 568 / P 25</strain>
    </source>
</reference>
<reference key="2">
    <citation type="journal article" date="2014" name="Elife">
        <title>Prediction and characterization of enzymatic activities guided by sequence similarity and genome neighborhood networks.</title>
        <authorList>
            <person name="Zhao S."/>
            <person name="Sakai A."/>
            <person name="Zhang X."/>
            <person name="Vetting M.W."/>
            <person name="Kumar R."/>
            <person name="Hillerich B."/>
            <person name="San Francisco B."/>
            <person name="Solbiati J."/>
            <person name="Steves A."/>
            <person name="Brown S."/>
            <person name="Akiva E."/>
            <person name="Barber A."/>
            <person name="Seidel R.D."/>
            <person name="Babbitt P.C."/>
            <person name="Almo S.C."/>
            <person name="Gerlt J.A."/>
            <person name="Jacobson M.P."/>
        </authorList>
    </citation>
    <scope>X-RAY CRYSTALLOGRAPHY (1.75 ANGSTROMS) IN COMPLEX WITH AN UNKNOWN LIGAND</scope>
    <scope>FUNCTION</scope>
    <scope>CATALYTIC ACTIVITY</scope>
    <scope>BIOPHYSICOCHEMICAL PROPERTIES</scope>
</reference>
<keyword id="KW-0002">3D-structure</keyword>
<keyword id="KW-0413">Isomerase</keyword>
<keyword id="KW-1185">Reference proteome</keyword>
<protein>
    <recommendedName>
        <fullName evidence="3">4-hydroxyproline 2-epimerase</fullName>
        <shortName>4Hyp 2-epimerase</shortName>
        <shortName evidence="3">4HypE</shortName>
        <ecNumber evidence="2">5.1.1.8</ecNumber>
    </recommendedName>
</protein>
<organism>
    <name type="scientific">Xanthomonas campestris pv. campestris (strain ATCC 33913 / DSM 3586 / NCPPB 528 / LMG 568 / P 25)</name>
    <dbReference type="NCBI Taxonomy" id="190485"/>
    <lineage>
        <taxon>Bacteria</taxon>
        <taxon>Pseudomonadati</taxon>
        <taxon>Pseudomonadota</taxon>
        <taxon>Gammaproteobacteria</taxon>
        <taxon>Lysobacterales</taxon>
        <taxon>Lysobacteraceae</taxon>
        <taxon>Xanthomonas</taxon>
    </lineage>
</organism>
<evidence type="ECO:0000250" key="1">
    <source>
        <dbReference type="UniProtKB" id="Q4KGU2"/>
    </source>
</evidence>
<evidence type="ECO:0000269" key="2">
    <source>
    </source>
</evidence>
<evidence type="ECO:0000303" key="3">
    <source>
    </source>
</evidence>
<evidence type="ECO:0000305" key="4"/>
<evidence type="ECO:0000312" key="5">
    <source>
        <dbReference type="EMBL" id="AAM41693.1"/>
    </source>
</evidence>
<evidence type="ECO:0007829" key="6">
    <source>
        <dbReference type="PDB" id="4JUU"/>
    </source>
</evidence>
<gene>
    <name evidence="5" type="ordered locus">XCC2415</name>
</gene>
<feature type="chain" id="PRO_0000432246" description="4-hydroxyproline 2-epimerase">
    <location>
        <begin position="1"/>
        <end position="312"/>
    </location>
</feature>
<feature type="active site" description="Proton acceptor" evidence="1">
    <location>
        <position position="88"/>
    </location>
</feature>
<feature type="active site" description="Proton donor" evidence="1">
    <location>
        <position position="238"/>
    </location>
</feature>
<feature type="binding site" evidence="1">
    <location>
        <begin position="89"/>
        <end position="90"/>
    </location>
    <ligand>
        <name>substrate</name>
    </ligand>
</feature>
<feature type="binding site" evidence="1">
    <location>
        <position position="208"/>
    </location>
    <ligand>
        <name>substrate</name>
    </ligand>
</feature>
<feature type="binding site" evidence="1">
    <location>
        <position position="234"/>
    </location>
    <ligand>
        <name>substrate</name>
    </ligand>
</feature>
<feature type="binding site" evidence="1">
    <location>
        <begin position="239"/>
        <end position="240"/>
    </location>
    <ligand>
        <name>substrate</name>
    </ligand>
</feature>
<feature type="strand" evidence="6">
    <location>
        <begin position="1"/>
        <end position="11"/>
    </location>
</feature>
<feature type="strand" evidence="6">
    <location>
        <begin position="14"/>
        <end position="22"/>
    </location>
</feature>
<feature type="helix" evidence="6">
    <location>
        <begin position="31"/>
        <end position="41"/>
    </location>
</feature>
<feature type="helix" evidence="6">
    <location>
        <begin position="43"/>
        <end position="50"/>
    </location>
</feature>
<feature type="turn" evidence="6">
    <location>
        <begin position="52"/>
        <end position="54"/>
    </location>
</feature>
<feature type="strand" evidence="6">
    <location>
        <begin position="60"/>
        <end position="65"/>
    </location>
</feature>
<feature type="strand" evidence="6">
    <location>
        <begin position="73"/>
        <end position="79"/>
    </location>
</feature>
<feature type="helix" evidence="6">
    <location>
        <begin position="89"/>
        <end position="101"/>
    </location>
</feature>
<feature type="strand" evidence="6">
    <location>
        <begin position="107"/>
        <end position="114"/>
    </location>
</feature>
<feature type="strand" evidence="6">
    <location>
        <begin position="117"/>
        <end position="123"/>
    </location>
</feature>
<feature type="strand" evidence="6">
    <location>
        <begin position="129"/>
        <end position="132"/>
    </location>
</feature>
<feature type="strand" evidence="6">
    <location>
        <begin position="136"/>
        <end position="147"/>
    </location>
</feature>
<feature type="turn" evidence="6">
    <location>
        <begin position="148"/>
        <end position="150"/>
    </location>
</feature>
<feature type="strand" evidence="6">
    <location>
        <begin position="151"/>
        <end position="168"/>
    </location>
</feature>
<feature type="helix" evidence="6">
    <location>
        <begin position="176"/>
        <end position="178"/>
    </location>
</feature>
<feature type="helix" evidence="6">
    <location>
        <begin position="179"/>
        <end position="196"/>
    </location>
</feature>
<feature type="helix" evidence="6">
    <location>
        <begin position="201"/>
        <end position="203"/>
    </location>
</feature>
<feature type="strand" evidence="6">
    <location>
        <begin position="208"/>
        <end position="214"/>
    </location>
</feature>
<feature type="turn" evidence="6">
    <location>
        <begin position="216"/>
        <end position="219"/>
    </location>
</feature>
<feature type="strand" evidence="6">
    <location>
        <begin position="222"/>
        <end position="227"/>
    </location>
</feature>
<feature type="helix" evidence="6">
    <location>
        <begin position="239"/>
        <end position="251"/>
    </location>
</feature>
<feature type="strand" evidence="6">
    <location>
        <begin position="261"/>
        <end position="264"/>
    </location>
</feature>
<feature type="strand" evidence="6">
    <location>
        <begin position="270"/>
        <end position="278"/>
    </location>
</feature>
<feature type="strand" evidence="6">
    <location>
        <begin position="281"/>
        <end position="288"/>
    </location>
</feature>
<feature type="strand" evidence="6">
    <location>
        <begin position="290"/>
        <end position="300"/>
    </location>
</feature>
<feature type="turn" evidence="6">
    <location>
        <begin position="305"/>
        <end position="308"/>
    </location>
</feature>
<dbReference type="EC" id="5.1.1.8" evidence="2"/>
<dbReference type="EMBL" id="AE008922">
    <property type="protein sequence ID" value="AAM41693.1"/>
    <property type="molecule type" value="Genomic_DNA"/>
</dbReference>
<dbReference type="RefSeq" id="NP_637769.1">
    <property type="nucleotide sequence ID" value="NC_003902.1"/>
</dbReference>
<dbReference type="RefSeq" id="WP_011037557.1">
    <property type="nucleotide sequence ID" value="NC_003902.1"/>
</dbReference>
<dbReference type="PDB" id="4JUU">
    <property type="method" value="X-ray"/>
    <property type="resolution" value="1.75 A"/>
    <property type="chains" value="A/B=1-312"/>
</dbReference>
<dbReference type="PDBsum" id="4JUU"/>
<dbReference type="SMR" id="Q8P833"/>
<dbReference type="STRING" id="190485.XCC2415"/>
<dbReference type="EnsemblBacteria" id="AAM41693">
    <property type="protein sequence ID" value="AAM41693"/>
    <property type="gene ID" value="XCC2415"/>
</dbReference>
<dbReference type="KEGG" id="xcc:XCC2415"/>
<dbReference type="PATRIC" id="fig|190485.4.peg.2575"/>
<dbReference type="eggNOG" id="COG3938">
    <property type="taxonomic scope" value="Bacteria"/>
</dbReference>
<dbReference type="HOGENOM" id="CLU_036729_1_0_6"/>
<dbReference type="OrthoDB" id="181267at2"/>
<dbReference type="SABIO-RK" id="Q8P833"/>
<dbReference type="EvolutionaryTrace" id="Q8P833"/>
<dbReference type="Proteomes" id="UP000001010">
    <property type="component" value="Chromosome"/>
</dbReference>
<dbReference type="GO" id="GO:0047580">
    <property type="term" value="F:4-hydroxyproline epimerase activity"/>
    <property type="evidence" value="ECO:0000314"/>
    <property type="project" value="CACAO"/>
</dbReference>
<dbReference type="FunFam" id="3.10.310.10:FF:000012">
    <property type="entry name" value="4-hydroxyproline 2-epimerase"/>
    <property type="match status" value="1"/>
</dbReference>
<dbReference type="Gene3D" id="3.10.310.10">
    <property type="entry name" value="Diaminopimelate Epimerase, Chain A, domain 1"/>
    <property type="match status" value="2"/>
</dbReference>
<dbReference type="InterPro" id="IPR008794">
    <property type="entry name" value="Pro_racemase_fam"/>
</dbReference>
<dbReference type="PANTHER" id="PTHR33442">
    <property type="entry name" value="TRANS-3-HYDROXY-L-PROLINE DEHYDRATASE"/>
    <property type="match status" value="1"/>
</dbReference>
<dbReference type="PANTHER" id="PTHR33442:SF1">
    <property type="entry name" value="TRANS-3-HYDROXY-L-PROLINE DEHYDRATASE"/>
    <property type="match status" value="1"/>
</dbReference>
<dbReference type="Pfam" id="PF05544">
    <property type="entry name" value="Pro_racemase"/>
    <property type="match status" value="1"/>
</dbReference>
<dbReference type="PIRSF" id="PIRSF029792">
    <property type="entry name" value="Pro_racemase"/>
    <property type="match status" value="1"/>
</dbReference>
<dbReference type="SFLD" id="SFLDS00028">
    <property type="entry name" value="Proline_Racemase"/>
    <property type="match status" value="1"/>
</dbReference>
<dbReference type="SUPFAM" id="SSF54506">
    <property type="entry name" value="Diaminopimelate epimerase-like"/>
    <property type="match status" value="1"/>
</dbReference>
<sequence length="312" mass="32711">MHTIDVIDSHTAGEPTRVVLAGFPDLGDGDLAQCRERFRSDFDHWRSAIACEPRGSDTMVGALLLPPRDPSACTGVIFFNNVGYLGMCGHGTIGVVRTLAELGRIAPGQHRIETPVGTVGVALADDGTVSIDNVESYRHAAGVEVDVPGHGRVRGDVAWGGNWFFITEQAPCALGLAQQRELTAYTEAIRLALEAAGITGEAGGEIDHIEISGVAPDGSGAARNFVLCPGLAYDRSPCGTGTSAKLACLAADGKLAEGERWLQQGILGSAFEGSYRHSGRGIAPRISGHAFITARSQLLIDPADPFAWGIVA</sequence>
<name>4HYPE_XANCP</name>
<accession>Q8P833</accession>
<comment type="function">
    <text evidence="2">Catalyzes the epimerization of trans-4-hydroxy-L-proline (t4LHyp) to cis-4-hydroxy-D-proline (c4DHyp). Is likely involved in a degradation pathway that converts t4LHyp to alpha-ketoglutarate. Can also catalyze the epimerization of trans-3-hydroxy-L-proline (t3LHyp) to cis-3-hydroxy-D-proline (c3DHyp), albeit with 500-fold lower efficiency. Displays no proline racemase activity.</text>
</comment>
<comment type="catalytic activity">
    <reaction evidence="2">
        <text>trans-4-hydroxy-L-proline = cis-4-hydroxy-D-proline</text>
        <dbReference type="Rhea" id="RHEA:21152"/>
        <dbReference type="ChEBI" id="CHEBI:57690"/>
        <dbReference type="ChEBI" id="CHEBI:58375"/>
        <dbReference type="EC" id="5.1.1.8"/>
    </reaction>
</comment>
<comment type="biophysicochemical properties">
    <kinetics>
        <KM evidence="2">0.67 mM for trans-4-hydroxy-L-proline</KM>
        <KM evidence="2">15 mM for trans-3-hydroxy-L-proline</KM>
        <text evidence="2">kcat is 28 sec(-1) for t4LHyp epimerization. kcat is 1.3 sec(-1) for t3LHyp epimerization.</text>
    </kinetics>
</comment>
<comment type="similarity">
    <text evidence="4">Belongs to the proline racemase family.</text>
</comment>
<proteinExistence type="evidence at protein level"/>